<reference key="1">
    <citation type="journal article" date="2003" name="Nature">
        <title>The DNA sequence of human chromosome 7.</title>
        <authorList>
            <person name="Hillier L.W."/>
            <person name="Fulton R.S."/>
            <person name="Fulton L.A."/>
            <person name="Graves T.A."/>
            <person name="Pepin K.H."/>
            <person name="Wagner-McPherson C."/>
            <person name="Layman D."/>
            <person name="Maas J."/>
            <person name="Jaeger S."/>
            <person name="Walker R."/>
            <person name="Wylie K."/>
            <person name="Sekhon M."/>
            <person name="Becker M.C."/>
            <person name="O'Laughlin M.D."/>
            <person name="Schaller M.E."/>
            <person name="Fewell G.A."/>
            <person name="Delehaunty K.D."/>
            <person name="Miner T.L."/>
            <person name="Nash W.E."/>
            <person name="Cordes M."/>
            <person name="Du H."/>
            <person name="Sun H."/>
            <person name="Edwards J."/>
            <person name="Bradshaw-Cordum H."/>
            <person name="Ali J."/>
            <person name="Andrews S."/>
            <person name="Isak A."/>
            <person name="Vanbrunt A."/>
            <person name="Nguyen C."/>
            <person name="Du F."/>
            <person name="Lamar B."/>
            <person name="Courtney L."/>
            <person name="Kalicki J."/>
            <person name="Ozersky P."/>
            <person name="Bielicki L."/>
            <person name="Scott K."/>
            <person name="Holmes A."/>
            <person name="Harkins R."/>
            <person name="Harris A."/>
            <person name="Strong C.M."/>
            <person name="Hou S."/>
            <person name="Tomlinson C."/>
            <person name="Dauphin-Kohlberg S."/>
            <person name="Kozlowicz-Reilly A."/>
            <person name="Leonard S."/>
            <person name="Rohlfing T."/>
            <person name="Rock S.M."/>
            <person name="Tin-Wollam A.-M."/>
            <person name="Abbott A."/>
            <person name="Minx P."/>
            <person name="Maupin R."/>
            <person name="Strowmatt C."/>
            <person name="Latreille P."/>
            <person name="Miller N."/>
            <person name="Johnson D."/>
            <person name="Murray J."/>
            <person name="Woessner J.P."/>
            <person name="Wendl M.C."/>
            <person name="Yang S.-P."/>
            <person name="Schultz B.R."/>
            <person name="Wallis J.W."/>
            <person name="Spieth J."/>
            <person name="Bieri T.A."/>
            <person name="Nelson J.O."/>
            <person name="Berkowicz N."/>
            <person name="Wohldmann P.E."/>
            <person name="Cook L.L."/>
            <person name="Hickenbotham M.T."/>
            <person name="Eldred J."/>
            <person name="Williams D."/>
            <person name="Bedell J.A."/>
            <person name="Mardis E.R."/>
            <person name="Clifton S.W."/>
            <person name="Chissoe S.L."/>
            <person name="Marra M.A."/>
            <person name="Raymond C."/>
            <person name="Haugen E."/>
            <person name="Gillett W."/>
            <person name="Zhou Y."/>
            <person name="James R."/>
            <person name="Phelps K."/>
            <person name="Iadanoto S."/>
            <person name="Bubb K."/>
            <person name="Simms E."/>
            <person name="Levy R."/>
            <person name="Clendenning J."/>
            <person name="Kaul R."/>
            <person name="Kent W.J."/>
            <person name="Furey T.S."/>
            <person name="Baertsch R.A."/>
            <person name="Brent M.R."/>
            <person name="Keibler E."/>
            <person name="Flicek P."/>
            <person name="Bork P."/>
            <person name="Suyama M."/>
            <person name="Bailey J.A."/>
            <person name="Portnoy M.E."/>
            <person name="Torrents D."/>
            <person name="Chinwalla A.T."/>
            <person name="Gish W.R."/>
            <person name="Eddy S.R."/>
            <person name="McPherson J.D."/>
            <person name="Olson M.V."/>
            <person name="Eichler E.E."/>
            <person name="Green E.D."/>
            <person name="Waterston R.H."/>
            <person name="Wilson R.K."/>
        </authorList>
    </citation>
    <scope>NUCLEOTIDE SEQUENCE [LARGE SCALE GENOMIC DNA]</scope>
</reference>
<reference key="2">
    <citation type="journal article" date="2004" name="Genome Res.">
        <title>The status, quality, and expansion of the NIH full-length cDNA project: the Mammalian Gene Collection (MGC).</title>
        <authorList>
            <consortium name="The MGC Project Team"/>
        </authorList>
    </citation>
    <scope>NUCLEOTIDE SEQUENCE [LARGE SCALE MRNA]</scope>
    <source>
        <tissue>Pancreas</tissue>
    </source>
</reference>
<reference key="3">
    <citation type="journal article" date="2004" name="Nat. Genet.">
        <title>Complete sequencing and characterization of 21,243 full-length human cDNAs.</title>
        <authorList>
            <person name="Ota T."/>
            <person name="Suzuki Y."/>
            <person name="Nishikawa T."/>
            <person name="Otsuki T."/>
            <person name="Sugiyama T."/>
            <person name="Irie R."/>
            <person name="Wakamatsu A."/>
            <person name="Hayashi K."/>
            <person name="Sato H."/>
            <person name="Nagai K."/>
            <person name="Kimura K."/>
            <person name="Makita H."/>
            <person name="Sekine M."/>
            <person name="Obayashi M."/>
            <person name="Nishi T."/>
            <person name="Shibahara T."/>
            <person name="Tanaka T."/>
            <person name="Ishii S."/>
            <person name="Yamamoto J."/>
            <person name="Saito K."/>
            <person name="Kawai Y."/>
            <person name="Isono Y."/>
            <person name="Nakamura Y."/>
            <person name="Nagahari K."/>
            <person name="Murakami K."/>
            <person name="Yasuda T."/>
            <person name="Iwayanagi T."/>
            <person name="Wagatsuma M."/>
            <person name="Shiratori A."/>
            <person name="Sudo H."/>
            <person name="Hosoiri T."/>
            <person name="Kaku Y."/>
            <person name="Kodaira H."/>
            <person name="Kondo H."/>
            <person name="Sugawara M."/>
            <person name="Takahashi M."/>
            <person name="Kanda K."/>
            <person name="Yokoi T."/>
            <person name="Furuya T."/>
            <person name="Kikkawa E."/>
            <person name="Omura Y."/>
            <person name="Abe K."/>
            <person name="Kamihara K."/>
            <person name="Katsuta N."/>
            <person name="Sato K."/>
            <person name="Tanikawa M."/>
            <person name="Yamazaki M."/>
            <person name="Ninomiya K."/>
            <person name="Ishibashi T."/>
            <person name="Yamashita H."/>
            <person name="Murakawa K."/>
            <person name="Fujimori K."/>
            <person name="Tanai H."/>
            <person name="Kimata M."/>
            <person name="Watanabe M."/>
            <person name="Hiraoka S."/>
            <person name="Chiba Y."/>
            <person name="Ishida S."/>
            <person name="Ono Y."/>
            <person name="Takiguchi S."/>
            <person name="Watanabe S."/>
            <person name="Yosida M."/>
            <person name="Hotuta T."/>
            <person name="Kusano J."/>
            <person name="Kanehori K."/>
            <person name="Takahashi-Fujii A."/>
            <person name="Hara H."/>
            <person name="Tanase T.-O."/>
            <person name="Nomura Y."/>
            <person name="Togiya S."/>
            <person name="Komai F."/>
            <person name="Hara R."/>
            <person name="Takeuchi K."/>
            <person name="Arita M."/>
            <person name="Imose N."/>
            <person name="Musashino K."/>
            <person name="Yuuki H."/>
            <person name="Oshima A."/>
            <person name="Sasaki N."/>
            <person name="Aotsuka S."/>
            <person name="Yoshikawa Y."/>
            <person name="Matsunawa H."/>
            <person name="Ichihara T."/>
            <person name="Shiohata N."/>
            <person name="Sano S."/>
            <person name="Moriya S."/>
            <person name="Momiyama H."/>
            <person name="Satoh N."/>
            <person name="Takami S."/>
            <person name="Terashima Y."/>
            <person name="Suzuki O."/>
            <person name="Nakagawa S."/>
            <person name="Senoh A."/>
            <person name="Mizoguchi H."/>
            <person name="Goto Y."/>
            <person name="Shimizu F."/>
            <person name="Wakebe H."/>
            <person name="Hishigaki H."/>
            <person name="Watanabe T."/>
            <person name="Sugiyama A."/>
            <person name="Takemoto M."/>
            <person name="Kawakami B."/>
            <person name="Yamazaki M."/>
            <person name="Watanabe K."/>
            <person name="Kumagai A."/>
            <person name="Itakura S."/>
            <person name="Fukuzumi Y."/>
            <person name="Fujimori Y."/>
            <person name="Komiyama M."/>
            <person name="Tashiro H."/>
            <person name="Tanigami A."/>
            <person name="Fujiwara T."/>
            <person name="Ono T."/>
            <person name="Yamada K."/>
            <person name="Fujii Y."/>
            <person name="Ozaki K."/>
            <person name="Hirao M."/>
            <person name="Ohmori Y."/>
            <person name="Kawabata A."/>
            <person name="Hikiji T."/>
            <person name="Kobatake N."/>
            <person name="Inagaki H."/>
            <person name="Ikema Y."/>
            <person name="Okamoto S."/>
            <person name="Okitani R."/>
            <person name="Kawakami T."/>
            <person name="Noguchi S."/>
            <person name="Itoh T."/>
            <person name="Shigeta K."/>
            <person name="Senba T."/>
            <person name="Matsumura K."/>
            <person name="Nakajima Y."/>
            <person name="Mizuno T."/>
            <person name="Morinaga M."/>
            <person name="Sasaki M."/>
            <person name="Togashi T."/>
            <person name="Oyama M."/>
            <person name="Hata H."/>
            <person name="Watanabe M."/>
            <person name="Komatsu T."/>
            <person name="Mizushima-Sugano J."/>
            <person name="Satoh T."/>
            <person name="Shirai Y."/>
            <person name="Takahashi Y."/>
            <person name="Nakagawa K."/>
            <person name="Okumura K."/>
            <person name="Nagase T."/>
            <person name="Nomura N."/>
            <person name="Kikuchi H."/>
            <person name="Masuho Y."/>
            <person name="Yamashita R."/>
            <person name="Nakai K."/>
            <person name="Yada T."/>
            <person name="Nakamura Y."/>
            <person name="Ohara O."/>
            <person name="Isogai T."/>
            <person name="Sugano S."/>
        </authorList>
    </citation>
    <scope>NUCLEOTIDE SEQUENCE [LARGE SCALE MRNA] OF 710-1066</scope>
</reference>
<reference key="4">
    <citation type="journal article" date="2008" name="Proc. Natl. Acad. Sci. U.S.A.">
        <title>A quantitative atlas of mitotic phosphorylation.</title>
        <authorList>
            <person name="Dephoure N."/>
            <person name="Zhou C."/>
            <person name="Villen J."/>
            <person name="Beausoleil S.A."/>
            <person name="Bakalarski C.E."/>
            <person name="Elledge S.J."/>
            <person name="Gygi S.P."/>
        </authorList>
    </citation>
    <scope>PHOSPHORYLATION [LARGE SCALE ANALYSIS] AT SER-247</scope>
    <scope>IDENTIFICATION BY MASS SPECTROMETRY [LARGE SCALE ANALYSIS]</scope>
    <source>
        <tissue>Cervix carcinoma</tissue>
    </source>
</reference>
<reference key="5">
    <citation type="journal article" date="2013" name="J. Proteome Res.">
        <title>Toward a comprehensive characterization of a human cancer cell phosphoproteome.</title>
        <authorList>
            <person name="Zhou H."/>
            <person name="Di Palma S."/>
            <person name="Preisinger C."/>
            <person name="Peng M."/>
            <person name="Polat A.N."/>
            <person name="Heck A.J."/>
            <person name="Mohammed S."/>
        </authorList>
    </citation>
    <scope>PHOSPHORYLATION [LARGE SCALE ANALYSIS] AT SER-30</scope>
    <scope>IDENTIFICATION BY MASS SPECTROMETRY [LARGE SCALE ANALYSIS]</scope>
    <source>
        <tissue>Erythroleukemia</tissue>
    </source>
</reference>
<reference key="6">
    <citation type="journal article" date="2014" name="J. Cell Sci.">
        <title>Subunit composition of the human cytoplasmic dynein-2 complex.</title>
        <authorList>
            <person name="Asante D."/>
            <person name="Stevenson N.L."/>
            <person name="Stephens D.J."/>
        </authorList>
    </citation>
    <scope>IDENTIFICATION IN THE CYTOPLASMIC DYNEIN 2 COMPLEX</scope>
    <scope>SUBCELLULAR LOCATION</scope>
    <scope>FUNCTION</scope>
</reference>
<reference key="7">
    <citation type="journal article" date="2015" name="Clin. Genet.">
        <title>Whole exome sequencing is an efficient, sensitive and specific method for determining the genetic cause of short-rib thoracic dystrophies.</title>
        <authorList>
            <person name="McInerney-Leo A.M."/>
            <person name="Harris J.E."/>
            <person name="Leo P.J."/>
            <person name="Marshall M.S."/>
            <person name="Gardiner B."/>
            <person name="Kinning E."/>
            <person name="Leong H.Y."/>
            <person name="McKenzie F."/>
            <person name="Ong W.P."/>
            <person name="Vodopiutz J."/>
            <person name="Wicking C."/>
            <person name="Brown M.A."/>
            <person name="Zankl A."/>
            <person name="Duncan E.L."/>
        </authorList>
    </citation>
    <scope>VARIANT SRTD8 642-ARG--LYS-1066 DEL</scope>
</reference>
<reference key="8">
    <citation type="journal article" date="2015" name="Nat. Commun.">
        <title>TCTEX1D2 mutations underlie Jeune asphyxiating thoracic dystrophy with impaired retrograde intraflagellar transport.</title>
        <authorList>
            <consortium name="UK10K"/>
            <person name="Schmidts M."/>
            <person name="Hou Y."/>
            <person name="Cortes C.R."/>
            <person name="Mans D.A."/>
            <person name="Huber C."/>
            <person name="Boldt K."/>
            <person name="Patel M."/>
            <person name="van Reeuwijk J."/>
            <person name="Plaza J.M."/>
            <person name="van Beersum S.E."/>
            <person name="Yap Z.M."/>
            <person name="Letteboer S.J."/>
            <person name="Taylor S.P."/>
            <person name="Herridge W."/>
            <person name="Johnson C.A."/>
            <person name="Scambler P.J."/>
            <person name="Ueffing M."/>
            <person name="Kayserili H."/>
            <person name="Krakow D."/>
            <person name="King S.M."/>
            <person name="Beales P.L."/>
            <person name="Al-Gazali L."/>
            <person name="Wicking C."/>
            <person name="Cormier-Daire V."/>
            <person name="Roepman R."/>
            <person name="Mitchison H.M."/>
            <person name="Witman G.B."/>
        </authorList>
    </citation>
    <scope>INTERACTION WITH DYNLT2B</scope>
</reference>
<reference key="9">
    <citation type="journal article" date="2016" name="Nat. Commun.">
        <authorList>
            <consortium name="UK10K"/>
            <person name="Schmidts M."/>
            <person name="Hou Y."/>
            <person name="Cortes C.R."/>
            <person name="Mans D.A."/>
            <person name="Huber C."/>
            <person name="Boldt K."/>
            <person name="Patel M."/>
            <person name="van Reeuwijk J."/>
            <person name="Plaza J.M."/>
            <person name="van Beersum S.E."/>
            <person name="Yap Z.M."/>
            <person name="Letteboer S.J."/>
            <person name="Taylor S.P."/>
            <person name="Herridge W."/>
            <person name="Johnson C.A."/>
            <person name="Scambler P.J."/>
            <person name="Ueffing M."/>
            <person name="Kayserili H."/>
            <person name="Krakow D."/>
            <person name="King S.M."/>
            <person name="Beales P.L."/>
            <person name="Al-Gazali L."/>
            <person name="Wicking C."/>
            <person name="Cormier-Daire V."/>
            <person name="Roepman R."/>
            <person name="Mitchison H.M."/>
            <person name="Witman G.B."/>
        </authorList>
    </citation>
    <scope>ERRATUM OF PUBMED:26044572</scope>
</reference>
<reference key="10">
    <citation type="journal article" date="2013" name="Am. J. Hum. Genet.">
        <title>Short-rib polydactyly and Jeune syndromes are caused by mutations in WDR60.</title>
        <authorList>
            <person name="McInerney-Leo A.M."/>
            <person name="Schmidts M."/>
            <person name="Cortes C.R."/>
            <person name="Leo P.J."/>
            <person name="Gener B."/>
            <person name="Courtney A.D."/>
            <person name="Gardiner B."/>
            <person name="Harris J.A."/>
            <person name="Lu Y."/>
            <person name="Marshall M."/>
            <person name="Scambler P.J."/>
            <person name="Beales P.L."/>
            <person name="Brown M.A."/>
            <person name="Zankl A."/>
            <person name="Mitchison H.M."/>
            <person name="Duncan E.L."/>
            <person name="Wicking C."/>
        </authorList>
    </citation>
    <scope>VARIANTS SRTD8 631-GLN--LYS-1066 DEL AND MET-749</scope>
    <scope>FUNCTION</scope>
    <scope>SUBCELLULAR LOCATION</scope>
    <scope>TISSUE SPECIFICITY</scope>
</reference>
<reference key="11">
    <citation type="journal article" date="2018" name="Mol. Biol. Cell">
        <title>Interaction of WDR60 intermediate chain with TCTEX1D2 light chain of the dynein-2 complex is crucial for ciliary protein trafficking.</title>
        <authorList>
            <person name="Hamada Y."/>
            <person name="Tsurumi Y."/>
            <person name="Nozaki S."/>
            <person name="Katoh Y."/>
            <person name="Nakayama K."/>
        </authorList>
    </citation>
    <scope>SUBUNIT</scope>
    <scope>FUNCTION</scope>
    <scope>INTERACTION WITH DYNC2I2</scope>
</reference>
<reference key="12">
    <citation type="journal article" date="2018" name="Elife">
        <title>Dynein-2 intermediate chains play crucial but distinct roles in primary cilia formation and function.</title>
        <authorList>
            <person name="Vuolo L."/>
            <person name="Stevenson N.L."/>
            <person name="Heesom K.J."/>
            <person name="Stephens D.J."/>
        </authorList>
    </citation>
    <scope>FUNCTION</scope>
    <scope>INTERACTION WITH DYNC2I2</scope>
    <scope>CHARACTERIZATION OF VARIANTS SRTD8 631-GLN--LYS-1066 DEL AND MET-749</scope>
</reference>
<reference key="13">
    <citation type="journal article" date="2019" name="Mol. Biol. Cell">
        <title>Interactions of the dynein-2 intermediate chain WDR34 with the light chains are required for ciliary retrograde protein trafficking.</title>
        <authorList>
            <person name="Tsurumi Y."/>
            <person name="Hamada Y."/>
            <person name="Katoh Y."/>
            <person name="Nakayama K."/>
        </authorList>
    </citation>
    <scope>FUNCTION</scope>
</reference>
<reference evidence="13 14" key="14">
    <citation type="journal article" date="2019" name="Nat. Struct. Mol. Biol.">
        <title>Structure of the dynein-2 complex and its assembly with intraflagellar transport trains.</title>
        <authorList>
            <person name="Toropova K."/>
            <person name="Zalyte R."/>
            <person name="Mukhopadhyay A.G."/>
            <person name="Mladenov M."/>
            <person name="Carter A.P."/>
            <person name="Roberts A.J."/>
        </authorList>
    </citation>
    <scope>STRUCTURE BY ELECTRON MICROSCOPY (3.90 ANGSTROMS) OF THE CYTOPLASMIC DYNEIN 2 COMPLEX</scope>
    <scope>SUBUNIT</scope>
</reference>
<keyword id="KW-0002">3D-structure</keyword>
<keyword id="KW-0966">Cell projection</keyword>
<keyword id="KW-1186">Ciliopathy</keyword>
<keyword id="KW-0969">Cilium</keyword>
<keyword id="KW-0970">Cilium biogenesis/degradation</keyword>
<keyword id="KW-0963">Cytoplasm</keyword>
<keyword id="KW-0206">Cytoskeleton</keyword>
<keyword id="KW-0225">Disease variant</keyword>
<keyword id="KW-0597">Phosphoprotein</keyword>
<keyword id="KW-1267">Proteomics identification</keyword>
<keyword id="KW-1185">Reference proteome</keyword>
<keyword id="KW-0677">Repeat</keyword>
<keyword id="KW-0853">WD repeat</keyword>
<accession>Q8WVS4</accession>
<accession>Q9NW58</accession>
<proteinExistence type="evidence at protein level"/>
<feature type="chain" id="PRO_0000242142" description="Cytoplasmic dynein 2 intermediate chain 1">
    <location>
        <begin position="1"/>
        <end position="1066"/>
    </location>
</feature>
<feature type="repeat" description="WD 1" evidence="1">
    <location>
        <begin position="694"/>
        <end position="734"/>
    </location>
</feature>
<feature type="repeat" description="WD 2" evidence="1">
    <location>
        <begin position="775"/>
        <end position="821"/>
    </location>
</feature>
<feature type="repeat" description="WD 3" evidence="1">
    <location>
        <begin position="907"/>
        <end position="947"/>
    </location>
</feature>
<feature type="repeat" description="WD 4" evidence="1">
    <location>
        <begin position="952"/>
        <end position="992"/>
    </location>
</feature>
<feature type="region of interest" description="Disordered" evidence="2">
    <location>
        <begin position="22"/>
        <end position="366"/>
    </location>
</feature>
<feature type="region of interest" description="Disordered" evidence="2">
    <location>
        <begin position="381"/>
        <end position="408"/>
    </location>
</feature>
<feature type="region of interest" description="Binding to the DYNLT2B-DYNLT1/DYNLT3 dimer" evidence="7">
    <location>
        <begin position="473"/>
        <end position="552"/>
    </location>
</feature>
<feature type="compositionally biased region" description="Basic and acidic residues" evidence="2">
    <location>
        <begin position="30"/>
        <end position="135"/>
    </location>
</feature>
<feature type="compositionally biased region" description="Basic and acidic residues" evidence="2">
    <location>
        <begin position="147"/>
        <end position="171"/>
    </location>
</feature>
<feature type="compositionally biased region" description="Basic and acidic residues" evidence="2">
    <location>
        <begin position="180"/>
        <end position="256"/>
    </location>
</feature>
<feature type="compositionally biased region" description="Basic and acidic residues" evidence="2">
    <location>
        <begin position="264"/>
        <end position="308"/>
    </location>
</feature>
<feature type="compositionally biased region" description="Basic and acidic residues" evidence="2">
    <location>
        <begin position="316"/>
        <end position="336"/>
    </location>
</feature>
<feature type="compositionally biased region" description="Acidic residues" evidence="2">
    <location>
        <begin position="351"/>
        <end position="362"/>
    </location>
</feature>
<feature type="compositionally biased region" description="Acidic residues" evidence="2">
    <location>
        <begin position="381"/>
        <end position="397"/>
    </location>
</feature>
<feature type="compositionally biased region" description="Basic and acidic residues" evidence="2">
    <location>
        <begin position="399"/>
        <end position="408"/>
    </location>
</feature>
<feature type="modified residue" description="Phosphoserine" evidence="16">
    <location>
        <position position="30"/>
    </location>
</feature>
<feature type="modified residue" description="Phosphoserine" evidence="15">
    <location>
        <position position="247"/>
    </location>
</feature>
<feature type="sequence variant" id="VAR_026841" description="In dbSNP:rs17837851.">
    <original>E</original>
    <variation>G</variation>
    <location>
        <position position="91"/>
    </location>
</feature>
<feature type="sequence variant" id="VAR_026842" description="In dbSNP:rs2788478.">
    <original>Q</original>
    <variation>R</variation>
    <location>
        <position position="273"/>
    </location>
</feature>
<feature type="sequence variant" id="VAR_083839" description="In SRTD8; Reduces interaction with IFT proteins." evidence="3 8">
    <location>
        <begin position="631"/>
        <end position="1066"/>
    </location>
</feature>
<feature type="sequence variant" id="VAR_079178" description="In SRTD8." evidence="5">
    <location>
        <begin position="642"/>
        <end position="1066"/>
    </location>
</feature>
<feature type="sequence variant" id="VAR_070197" description="In SRTD8; does not affect interaction with DYNC2I2; dbSNP:rs587777065." evidence="3 8">
    <original>T</original>
    <variation>M</variation>
    <location>
        <position position="749"/>
    </location>
</feature>
<feature type="sequence conflict" description="In Ref. 2; AAH14491." evidence="11" ref="2">
    <original>N</original>
    <variation>K</variation>
    <location>
        <position position="225"/>
    </location>
</feature>
<feature type="sequence conflict" description="In Ref. 2; AAH14491." evidence="11" ref="2">
    <original>S</original>
    <variation>F</variation>
    <location>
        <position position="292"/>
    </location>
</feature>
<protein>
    <recommendedName>
        <fullName>Cytoplasmic dynein 2 intermediate chain 1</fullName>
    </recommendedName>
    <alternativeName>
        <fullName>Dynein 2 intermediate chain 1</fullName>
    </alternativeName>
    <alternativeName>
        <fullName>WD repeat-containing protein 60</fullName>
    </alternativeName>
</protein>
<comment type="function">
    <text evidence="3 4 7 8 9 10">Acts as one of several non-catalytic accessory components of the cytoplasmic dynein 2 complex (dynein-2 complex), a motor protein complex that drives the movement of cargos along microtubules within cilia and flagella in concert with the intraflagellar transport (IFT) system (PubMed:23910462, PubMed:25205765, PubMed:29742051, PubMed:31451806). DYNC2I1 plays a major role in retrograde ciliary protein trafficking in cilia and flagella (PubMed:29742051, PubMed:30320547, PubMed:30649997). Also requires to maintain a functional transition zone (PubMed:30320547).</text>
</comment>
<comment type="subunit">
    <text evidence="4 6 7 8 10">Intermediate chain of the cytoplasmic dynein complex 2, a multisubunit complex, composed at least of eleven different proteins (PubMed:25205765, PubMed:31451806). The cytoplasmic dynein 2 complex consists of two catalytic heavy chains (HCs) and a number of non-catalytic subunits presented by intermediate chains (ICs), light intermediate chains (LICs) and light chains (LCs). Among them, a heavy chain (DYNC2H1), two intermediate chains (DYNC2I2 and DYNC2I1), a light intermediate chain (DYNC2LI1), and a light chain (DYNLT2B) are unique to the cytoplasmic dynein complex 2, but a subset of the light chains are also shared by dynein-1 and dynein-2 complexes (PubMed:25205765, PubMed:31451806). Interacts with DYNC2I2; their C-terminal domains each bind a copy of the heavy chain, and their extended N-terminal regions are held together by an array of light chain dimers (PubMed:29742051, PubMed:30320547, PubMed:31451806). Interacts with DYNLT2B (PubMed:26044572). Interacts (via the N-terminal half) with DYNLT2B-DYNLT1 dimer or with DYNLT2B-DYNLT3 dimer; this interaction is crucial for retrograde trafficking of ciliary proteins (PubMed:29742051).</text>
</comment>
<comment type="interaction">
    <interactant intactId="EBI-2556085">
        <id>Q8WVS4</id>
    </interactant>
    <interactant intactId="EBI-2556091">
        <id>Q96EX3</id>
        <label>DYNC2I2</label>
    </interactant>
    <organismsDiffer>false</organismsDiffer>
    <experiments>6</experiments>
</comment>
<comment type="interaction">
    <interactant intactId="EBI-2556085">
        <id>Q8WVS4</id>
    </interactant>
    <interactant intactId="EBI-357298">
        <id>Q9Y266</id>
        <label>NUDC</label>
    </interactant>
    <organismsDiffer>false</organismsDiffer>
    <experiments>3</experiments>
</comment>
<comment type="subcellular location">
    <subcellularLocation>
        <location evidence="3">Cell projection</location>
        <location evidence="3">Cilium</location>
    </subcellularLocation>
    <subcellularLocation>
        <location evidence="4">Cytoplasm</location>
        <location evidence="4">Cytoskeleton</location>
        <location evidence="4">Microtubule organizing center</location>
        <location evidence="4">Centrosome</location>
    </subcellularLocation>
    <text evidence="3">Located at the base of the primary cilium in serum-starved fibroblasts.</text>
</comment>
<comment type="tissue specificity">
    <text evidence="3">Expressed in chondrocytes (at protein level).</text>
</comment>
<comment type="disease" evidence="3 5 8">
    <disease id="DI-03926">
        <name>Short-rib thoracic dysplasia 8 with or without polydactyly</name>
        <acronym>SRTD8</acronym>
        <description>A form of short-rib thoracic dysplasia, a group of autosomal recessive ciliopathies that are characterized by a constricted thoracic cage, short ribs, shortened tubular bones, and a 'trident' appearance of the acetabular roof. Polydactyly is variably present. Non-skeletal involvement can include cleft lip/palate as well as anomalies of major organs such as the brain, eye, heart, kidneys, liver, pancreas, intestines, and genitalia. Some forms of the disease are lethal in the neonatal period due to respiratory insufficiency secondary to a severely restricted thoracic cage, whereas others are compatible with life. Disease spectrum encompasses Ellis-van Creveld syndrome, asphyxiating thoracic dystrophy (Jeune syndrome), Mainzer-Saldino syndrome, and short rib-polydactyly syndrome.</description>
        <dbReference type="MIM" id="615503"/>
    </disease>
    <text>The disease is caused by variants affecting the gene represented in this entry. Fibroblasts from affected individuals exhibit a defect in ciliogenesis and aberrant accumulation of the GLI2 transcription factor at the centrosome or basal body in the absence of an obvious axoneme.</text>
</comment>
<comment type="similarity">
    <text evidence="11">Belongs to the dynein light intermediate chain family.</text>
</comment>
<comment type="sequence caution" evidence="11">
    <conflict type="erroneous initiation">
        <sequence resource="EMBL-CDS" id="BAA91528"/>
    </conflict>
    <text>Truncated N-terminus.</text>
</comment>
<evidence type="ECO:0000255" key="1"/>
<evidence type="ECO:0000256" key="2">
    <source>
        <dbReference type="SAM" id="MobiDB-lite"/>
    </source>
</evidence>
<evidence type="ECO:0000269" key="3">
    <source>
    </source>
</evidence>
<evidence type="ECO:0000269" key="4">
    <source>
    </source>
</evidence>
<evidence type="ECO:0000269" key="5">
    <source>
    </source>
</evidence>
<evidence type="ECO:0000269" key="6">
    <source>
    </source>
</evidence>
<evidence type="ECO:0000269" key="7">
    <source>
    </source>
</evidence>
<evidence type="ECO:0000269" key="8">
    <source>
    </source>
</evidence>
<evidence type="ECO:0000269" key="9">
    <source>
    </source>
</evidence>
<evidence type="ECO:0000269" key="10">
    <source>
    </source>
</evidence>
<evidence type="ECO:0000305" key="11"/>
<evidence type="ECO:0000312" key="12">
    <source>
        <dbReference type="HGNC" id="HGNC:21862"/>
    </source>
</evidence>
<evidence type="ECO:0007744" key="13">
    <source>
        <dbReference type="PDB" id="6RLB"/>
    </source>
</evidence>
<evidence type="ECO:0007744" key="14">
    <source>
        <dbReference type="PDB" id="6SC2"/>
    </source>
</evidence>
<evidence type="ECO:0007744" key="15">
    <source>
    </source>
</evidence>
<evidence type="ECO:0007744" key="16">
    <source>
    </source>
</evidence>
<sequence length="1066" mass="122571">MEPGKRRTKDDTWKADDLRKHLWAIQSGGSKEERKHREKKLRKESEMDLPEHKEPRCRDPDQDARSRDRVAEVHTAKESPRGERDRDRQRERRRDAKDREKEKLKEKHREAEKSHSRGKDREKEKDRRARKEELRQTVAHHNLLGQETRDRQLLERAERKGRSVSKVRSEEKDEDSERGDEDRERRYRERKLQYGDSKDNPLKYWLYKEEGERRHRKPREPDRDNKHREKSSTREKREKYSKEKSNSFSDKGEERHKEKRHKEGFHFDDERHQSNVDRKEKSAKDEPRKRESQNGEHRNRGASSKRDGTSSQHAENLVRNHGKDKDSRRKHGHEEGSSVWWKLDQRPGGEETVEIEKEETDLENARADAYTASCEDDFEDYEDDFEVCDGDDDESSNEPESREKLEELPLAQKKEIQEIQRAINAENERIGELSLKLFQKRGRTEFEKEPRTDTNSSPSRASVCGIFVDFASASHRQKSRTQALKQKMRSTKLLRLIDLDFSFTFSLLDLPPVNEYDMYIRNFGKKNTKQAYVQCNEDNVERDIQTEEIETREVWTQHPGESTVVSGGSEQRDTSDAVVMPKIDTPRLCSFLRAACQVMAVLLEEDRLAAEPSWNLRAQDRALYFSDSSSQLNTSLPFLQNRKVSSLHTSRVQRQMVVSVHDLPEKSFVPLLDSKYVLCVWDIWQPSGPQKVLICESQVTCCCLSPLKAFLLFAGTAHGSVVVWDLREDSRLHYSVTLSDGFWTFRTATFSTDGILTSVNHRSPLQAVEPISTSVHKKQSFVLSPFSTQEEMSGLSFHIASLDESGVLNVWVVVELPKADIAGSISDLGLMPGGRVKLVHSALIQLGDSLSHKGNEFWGTTQTLNVKFLPSDPNHFIIGTDMGLISHGTRQDLRVAPKLFKPQQHGIRPVKVNVIDFSPFGEPIFLAGCSDGSIRLHQLSSAFPLLQWDSSTDSHAVTGLQWSPTRPAVFLVQDDTSNIYIWDLLQSDLGPVAKQQVSPNRLVAMAAVGEPEKAGGSFLALVLARASGSIDIQHLKRRWAAPEVDECNRLRLLLQEALWPEGKLHK</sequence>
<dbReference type="EMBL" id="AC004863">
    <property type="status" value="NOT_ANNOTATED_CDS"/>
    <property type="molecule type" value="Genomic_DNA"/>
</dbReference>
<dbReference type="EMBL" id="AC124833">
    <property type="status" value="NOT_ANNOTATED_CDS"/>
    <property type="molecule type" value="Genomic_DNA"/>
</dbReference>
<dbReference type="EMBL" id="BC014491">
    <property type="protein sequence ID" value="AAH14491.2"/>
    <property type="molecule type" value="mRNA"/>
</dbReference>
<dbReference type="EMBL" id="AK001162">
    <property type="protein sequence ID" value="BAA91528.1"/>
    <property type="status" value="ALT_INIT"/>
    <property type="molecule type" value="mRNA"/>
</dbReference>
<dbReference type="CCDS" id="CCDS47757.1"/>
<dbReference type="RefSeq" id="NP_060521.4">
    <property type="nucleotide sequence ID" value="NM_018051.4"/>
</dbReference>
<dbReference type="PDB" id="6RLB">
    <property type="method" value="EM"/>
    <property type="resolution" value="4.50 A"/>
    <property type="chains" value="C=1-1066"/>
</dbReference>
<dbReference type="PDB" id="6SC2">
    <property type="method" value="EM"/>
    <property type="resolution" value="3.90 A"/>
    <property type="chains" value="C=1-1066"/>
</dbReference>
<dbReference type="PDB" id="8RGG">
    <property type="method" value="EM"/>
    <property type="resolution" value="4.00 A"/>
    <property type="chains" value="C=1-1066"/>
</dbReference>
<dbReference type="PDB" id="8RGH">
    <property type="method" value="EM"/>
    <property type="resolution" value="3.90 A"/>
    <property type="chains" value="C=1-1066"/>
</dbReference>
<dbReference type="PDBsum" id="6RLB"/>
<dbReference type="PDBsum" id="6SC2"/>
<dbReference type="PDBsum" id="8RGG"/>
<dbReference type="PDBsum" id="8RGH"/>
<dbReference type="EMDB" id="EMD-19132"/>
<dbReference type="EMDB" id="EMD-19133"/>
<dbReference type="EMDB" id="EMD-4918"/>
<dbReference type="SMR" id="Q8WVS4"/>
<dbReference type="BioGRID" id="120422">
    <property type="interactions" value="51"/>
</dbReference>
<dbReference type="CORUM" id="Q8WVS4"/>
<dbReference type="FunCoup" id="Q8WVS4">
    <property type="interactions" value="817"/>
</dbReference>
<dbReference type="IntAct" id="Q8WVS4">
    <property type="interactions" value="42"/>
</dbReference>
<dbReference type="MINT" id="Q8WVS4"/>
<dbReference type="STRING" id="9606.ENSP00000384290"/>
<dbReference type="TCDB" id="1.X.1.1.1">
    <property type="family name" value="the intraflagellar transporter-a complex (ift-a) family"/>
</dbReference>
<dbReference type="GlyGen" id="Q8WVS4">
    <property type="glycosylation" value="1 site, 1 O-linked glycan (1 site)"/>
</dbReference>
<dbReference type="iPTMnet" id="Q8WVS4"/>
<dbReference type="PhosphoSitePlus" id="Q8WVS4"/>
<dbReference type="BioMuta" id="WDR60"/>
<dbReference type="DMDM" id="296453073"/>
<dbReference type="jPOST" id="Q8WVS4"/>
<dbReference type="MassIVE" id="Q8WVS4"/>
<dbReference type="PaxDb" id="9606-ENSP00000384290"/>
<dbReference type="PeptideAtlas" id="Q8WVS4"/>
<dbReference type="ProteomicsDB" id="74818"/>
<dbReference type="Pumba" id="Q8WVS4"/>
<dbReference type="Antibodypedia" id="10739">
    <property type="antibodies" value="39 antibodies from 10 providers"/>
</dbReference>
<dbReference type="DNASU" id="55112"/>
<dbReference type="Ensembl" id="ENST00000407559.8">
    <property type="protein sequence ID" value="ENSP00000384290.3"/>
    <property type="gene ID" value="ENSG00000126870.16"/>
</dbReference>
<dbReference type="GeneID" id="55112"/>
<dbReference type="KEGG" id="hsa:55112"/>
<dbReference type="MANE-Select" id="ENST00000407559.8">
    <property type="protein sequence ID" value="ENSP00000384290.3"/>
    <property type="RefSeq nucleotide sequence ID" value="NM_018051.5"/>
    <property type="RefSeq protein sequence ID" value="NP_060521.4"/>
</dbReference>
<dbReference type="UCSC" id="uc003woe.5">
    <property type="organism name" value="human"/>
</dbReference>
<dbReference type="AGR" id="HGNC:21862"/>
<dbReference type="CTD" id="55112"/>
<dbReference type="DisGeNET" id="55112"/>
<dbReference type="GeneCards" id="DYNC2I1"/>
<dbReference type="HGNC" id="HGNC:21862">
    <property type="gene designation" value="DYNC2I1"/>
</dbReference>
<dbReference type="HPA" id="ENSG00000126870">
    <property type="expression patterns" value="Low tissue specificity"/>
</dbReference>
<dbReference type="MalaCards" id="DYNC2I1"/>
<dbReference type="MIM" id="615462">
    <property type="type" value="gene"/>
</dbReference>
<dbReference type="MIM" id="615503">
    <property type="type" value="phenotype"/>
</dbReference>
<dbReference type="neXtProt" id="NX_Q8WVS4"/>
<dbReference type="OpenTargets" id="ENSG00000126870"/>
<dbReference type="Orphanet" id="474">
    <property type="disease" value="Jeune syndrome"/>
</dbReference>
<dbReference type="Orphanet" id="93271">
    <property type="disease" value="Short rib-polydactyly syndrome, Verma-Naumoff type"/>
</dbReference>
<dbReference type="VEuPathDB" id="HostDB:ENSG00000126870"/>
<dbReference type="eggNOG" id="KOG1587">
    <property type="taxonomic scope" value="Eukaryota"/>
</dbReference>
<dbReference type="GeneTree" id="ENSGT00390000013743"/>
<dbReference type="HOGENOM" id="CLU_010610_0_0_1"/>
<dbReference type="InParanoid" id="Q8WVS4"/>
<dbReference type="OMA" id="ILNMWVV"/>
<dbReference type="OrthoDB" id="2162425at2759"/>
<dbReference type="PAN-GO" id="Q8WVS4">
    <property type="GO annotations" value="5 GO annotations based on evolutionary models"/>
</dbReference>
<dbReference type="PhylomeDB" id="Q8WVS4"/>
<dbReference type="TreeFam" id="TF329081"/>
<dbReference type="PathwayCommons" id="Q8WVS4"/>
<dbReference type="Reactome" id="R-HSA-5620924">
    <property type="pathway name" value="Intraflagellar transport"/>
</dbReference>
<dbReference type="SignaLink" id="Q8WVS4"/>
<dbReference type="BioGRID-ORCS" id="55112">
    <property type="hits" value="7 hits in 1153 CRISPR screens"/>
</dbReference>
<dbReference type="ChiTaRS" id="WDR60">
    <property type="organism name" value="human"/>
</dbReference>
<dbReference type="GenomeRNAi" id="55112"/>
<dbReference type="Pharos" id="Q8WVS4">
    <property type="development level" value="Tbio"/>
</dbReference>
<dbReference type="PRO" id="PR:Q8WVS4"/>
<dbReference type="Proteomes" id="UP000005640">
    <property type="component" value="Chromosome 7"/>
</dbReference>
<dbReference type="RNAct" id="Q8WVS4">
    <property type="molecule type" value="protein"/>
</dbReference>
<dbReference type="Bgee" id="ENSG00000126870">
    <property type="expression patterns" value="Expressed in sural nerve and 182 other cell types or tissues"/>
</dbReference>
<dbReference type="ExpressionAtlas" id="Q8WVS4">
    <property type="expression patterns" value="baseline and differential"/>
</dbReference>
<dbReference type="GO" id="GO:0005813">
    <property type="term" value="C:centrosome"/>
    <property type="evidence" value="ECO:0000314"/>
    <property type="project" value="UniProtKB"/>
</dbReference>
<dbReference type="GO" id="GO:0036064">
    <property type="term" value="C:ciliary basal body"/>
    <property type="evidence" value="ECO:0000314"/>
    <property type="project" value="HPA"/>
</dbReference>
<dbReference type="GO" id="GO:0097546">
    <property type="term" value="C:ciliary base"/>
    <property type="evidence" value="ECO:0000314"/>
    <property type="project" value="GO_Central"/>
</dbReference>
<dbReference type="GO" id="GO:0097542">
    <property type="term" value="C:ciliary tip"/>
    <property type="evidence" value="ECO:0000304"/>
    <property type="project" value="Reactome"/>
</dbReference>
<dbReference type="GO" id="GO:0005929">
    <property type="term" value="C:cilium"/>
    <property type="evidence" value="ECO:0000314"/>
    <property type="project" value="HPA"/>
</dbReference>
<dbReference type="GO" id="GO:0005868">
    <property type="term" value="C:cytoplasmic dynein complex"/>
    <property type="evidence" value="ECO:0000314"/>
    <property type="project" value="UniProtKB"/>
</dbReference>
<dbReference type="GO" id="GO:0005829">
    <property type="term" value="C:cytosol"/>
    <property type="evidence" value="ECO:0000314"/>
    <property type="project" value="HPA"/>
</dbReference>
<dbReference type="GO" id="GO:0005615">
    <property type="term" value="C:extracellular space"/>
    <property type="evidence" value="ECO:0007005"/>
    <property type="project" value="UniProtKB"/>
</dbReference>
<dbReference type="GO" id="GO:0000242">
    <property type="term" value="C:pericentriolar material"/>
    <property type="evidence" value="ECO:0000314"/>
    <property type="project" value="GO_Central"/>
</dbReference>
<dbReference type="GO" id="GO:0045504">
    <property type="term" value="F:dynein heavy chain binding"/>
    <property type="evidence" value="ECO:0007669"/>
    <property type="project" value="InterPro"/>
</dbReference>
<dbReference type="GO" id="GO:0045503">
    <property type="term" value="F:dynein light chain binding"/>
    <property type="evidence" value="ECO:0000353"/>
    <property type="project" value="GO_Central"/>
</dbReference>
<dbReference type="GO" id="GO:0060271">
    <property type="term" value="P:cilium assembly"/>
    <property type="evidence" value="ECO:0000315"/>
    <property type="project" value="GO_Central"/>
</dbReference>
<dbReference type="GO" id="GO:0048704">
    <property type="term" value="P:embryonic skeletal system morphogenesis"/>
    <property type="evidence" value="ECO:0000315"/>
    <property type="project" value="GO_Central"/>
</dbReference>
<dbReference type="GO" id="GO:0035721">
    <property type="term" value="P:intraciliary retrograde transport"/>
    <property type="evidence" value="ECO:0000314"/>
    <property type="project" value="UniProtKB"/>
</dbReference>
<dbReference type="FunFam" id="2.130.10.10:FF:000979">
    <property type="entry name" value="WD repeat domain 60"/>
    <property type="match status" value="1"/>
</dbReference>
<dbReference type="FunFam" id="2.130.10.10:FF:001197">
    <property type="entry name" value="WD repeat domain 60"/>
    <property type="match status" value="1"/>
</dbReference>
<dbReference type="Gene3D" id="2.130.10.10">
    <property type="entry name" value="YVTN repeat-like/Quinoprotein amine dehydrogenase"/>
    <property type="match status" value="2"/>
</dbReference>
<dbReference type="InterPro" id="IPR042505">
    <property type="entry name" value="DYNC2I1"/>
</dbReference>
<dbReference type="InterPro" id="IPR015943">
    <property type="entry name" value="WD40/YVTN_repeat-like_dom_sf"/>
</dbReference>
<dbReference type="InterPro" id="IPR036322">
    <property type="entry name" value="WD40_repeat_dom_sf"/>
</dbReference>
<dbReference type="InterPro" id="IPR001680">
    <property type="entry name" value="WD40_rpt"/>
</dbReference>
<dbReference type="PANTHER" id="PTHR16022:SF0">
    <property type="entry name" value="CYTOPLASMIC DYNEIN 2 INTERMEDIATE CHAIN 1"/>
    <property type="match status" value="1"/>
</dbReference>
<dbReference type="PANTHER" id="PTHR16022">
    <property type="entry name" value="WD REPEAT DOMAIN 60"/>
    <property type="match status" value="1"/>
</dbReference>
<dbReference type="SMART" id="SM00320">
    <property type="entry name" value="WD40"/>
    <property type="match status" value="3"/>
</dbReference>
<dbReference type="SUPFAM" id="SSF50978">
    <property type="entry name" value="WD40 repeat-like"/>
    <property type="match status" value="1"/>
</dbReference>
<name>DC2I1_HUMAN</name>
<gene>
    <name evidence="12" type="primary">DYNC2I1</name>
    <name type="synonym">WDR60</name>
</gene>
<organism>
    <name type="scientific">Homo sapiens</name>
    <name type="common">Human</name>
    <dbReference type="NCBI Taxonomy" id="9606"/>
    <lineage>
        <taxon>Eukaryota</taxon>
        <taxon>Metazoa</taxon>
        <taxon>Chordata</taxon>
        <taxon>Craniata</taxon>
        <taxon>Vertebrata</taxon>
        <taxon>Euteleostomi</taxon>
        <taxon>Mammalia</taxon>
        <taxon>Eutheria</taxon>
        <taxon>Euarchontoglires</taxon>
        <taxon>Primates</taxon>
        <taxon>Haplorrhini</taxon>
        <taxon>Catarrhini</taxon>
        <taxon>Hominidae</taxon>
        <taxon>Homo</taxon>
    </lineage>
</organism>